<organism>
    <name type="scientific">Thioalkalivibrio sulfidiphilus (strain HL-EbGR7)</name>
    <dbReference type="NCBI Taxonomy" id="396588"/>
    <lineage>
        <taxon>Bacteria</taxon>
        <taxon>Pseudomonadati</taxon>
        <taxon>Pseudomonadota</taxon>
        <taxon>Gammaproteobacteria</taxon>
        <taxon>Chromatiales</taxon>
        <taxon>Ectothiorhodospiraceae</taxon>
        <taxon>Thioalkalivibrio</taxon>
    </lineage>
</organism>
<accession>B8GRC0</accession>
<sequence length="513" mass="55359">MQLNPTEISELIKKRIASYDAAAQARTEGTVVSLSDGIVRLHGLADVMQGEMIEFPGNTYGLALNLERDSVGAVVLGDYKHIKEGDTARCTGRILEVPVGEALLGRVVNSLGMAVDGKGAIDTSLTSPIEKIAPGVIERQSVDQPVQTGLKAIDAMVPIGRGQRELIIGDRQTGKTAVAVDAIINQKGTGVKCIYVAVGQKASSIANVVTKLEQHGALEHTIIVAATASESAAMQFIAPYAGCAMGEYFRDRGQDALIIYDDLTKQAWAYRQVSLLLRRPPGREAYPGDVFYLHSRLLERASRVNAEYVEKFTNGEVKGKTGSLTALPIIETQAGDVSAFVPTNVISITDGQIFLETDLFNAGIRPAINAGLSVSRVGGAAQTKIIKKLGGGVRLALAQYRELAAFSQFASDLDELTRKQLERGKRVTELMKQGQFSPMSVAEMAFSLFAANEGYLDDVDAKKVVDFEKAMLDFLRSSKTDLLAKINEKGDYNDDIQAGMKAALDEFKAKHSW</sequence>
<name>ATPA_THISH</name>
<comment type="function">
    <text evidence="1">Produces ATP from ADP in the presence of a proton gradient across the membrane. The alpha chain is a regulatory subunit.</text>
</comment>
<comment type="catalytic activity">
    <reaction evidence="1">
        <text>ATP + H2O + 4 H(+)(in) = ADP + phosphate + 5 H(+)(out)</text>
        <dbReference type="Rhea" id="RHEA:57720"/>
        <dbReference type="ChEBI" id="CHEBI:15377"/>
        <dbReference type="ChEBI" id="CHEBI:15378"/>
        <dbReference type="ChEBI" id="CHEBI:30616"/>
        <dbReference type="ChEBI" id="CHEBI:43474"/>
        <dbReference type="ChEBI" id="CHEBI:456216"/>
        <dbReference type="EC" id="7.1.2.2"/>
    </reaction>
</comment>
<comment type="subunit">
    <text evidence="1">F-type ATPases have 2 components, CF(1) - the catalytic core - and CF(0) - the membrane proton channel. CF(1) has five subunits: alpha(3), beta(3), gamma(1), delta(1), epsilon(1). CF(0) has three main subunits: a(1), b(2) and c(9-12). The alpha and beta chains form an alternating ring which encloses part of the gamma chain. CF(1) is attached to CF(0) by a central stalk formed by the gamma and epsilon chains, while a peripheral stalk is formed by the delta and b chains.</text>
</comment>
<comment type="subcellular location">
    <subcellularLocation>
        <location evidence="1">Cell inner membrane</location>
        <topology evidence="1">Peripheral membrane protein</topology>
    </subcellularLocation>
</comment>
<comment type="similarity">
    <text evidence="1">Belongs to the ATPase alpha/beta chains family.</text>
</comment>
<evidence type="ECO:0000255" key="1">
    <source>
        <dbReference type="HAMAP-Rule" id="MF_01346"/>
    </source>
</evidence>
<dbReference type="EC" id="7.1.2.2" evidence="1"/>
<dbReference type="EMBL" id="CP001339">
    <property type="protein sequence ID" value="ACL74374.1"/>
    <property type="molecule type" value="Genomic_DNA"/>
</dbReference>
<dbReference type="RefSeq" id="WP_012639836.1">
    <property type="nucleotide sequence ID" value="NC_011901.1"/>
</dbReference>
<dbReference type="SMR" id="B8GRC0"/>
<dbReference type="STRING" id="396588.Tgr7_3307"/>
<dbReference type="KEGG" id="tgr:Tgr7_3307"/>
<dbReference type="eggNOG" id="COG0056">
    <property type="taxonomic scope" value="Bacteria"/>
</dbReference>
<dbReference type="HOGENOM" id="CLU_010091_2_1_6"/>
<dbReference type="OrthoDB" id="9803053at2"/>
<dbReference type="Proteomes" id="UP000002383">
    <property type="component" value="Chromosome"/>
</dbReference>
<dbReference type="GO" id="GO:0005886">
    <property type="term" value="C:plasma membrane"/>
    <property type="evidence" value="ECO:0007669"/>
    <property type="project" value="UniProtKB-SubCell"/>
</dbReference>
<dbReference type="GO" id="GO:0045259">
    <property type="term" value="C:proton-transporting ATP synthase complex"/>
    <property type="evidence" value="ECO:0007669"/>
    <property type="project" value="UniProtKB-KW"/>
</dbReference>
<dbReference type="GO" id="GO:0043531">
    <property type="term" value="F:ADP binding"/>
    <property type="evidence" value="ECO:0007669"/>
    <property type="project" value="TreeGrafter"/>
</dbReference>
<dbReference type="GO" id="GO:0005524">
    <property type="term" value="F:ATP binding"/>
    <property type="evidence" value="ECO:0007669"/>
    <property type="project" value="UniProtKB-UniRule"/>
</dbReference>
<dbReference type="GO" id="GO:0046933">
    <property type="term" value="F:proton-transporting ATP synthase activity, rotational mechanism"/>
    <property type="evidence" value="ECO:0007669"/>
    <property type="project" value="UniProtKB-UniRule"/>
</dbReference>
<dbReference type="CDD" id="cd18113">
    <property type="entry name" value="ATP-synt_F1_alpha_C"/>
    <property type="match status" value="1"/>
</dbReference>
<dbReference type="CDD" id="cd18116">
    <property type="entry name" value="ATP-synt_F1_alpha_N"/>
    <property type="match status" value="1"/>
</dbReference>
<dbReference type="CDD" id="cd01132">
    <property type="entry name" value="F1-ATPase_alpha_CD"/>
    <property type="match status" value="1"/>
</dbReference>
<dbReference type="FunFam" id="1.20.150.20:FF:000001">
    <property type="entry name" value="ATP synthase subunit alpha"/>
    <property type="match status" value="1"/>
</dbReference>
<dbReference type="FunFam" id="2.40.30.20:FF:000001">
    <property type="entry name" value="ATP synthase subunit alpha"/>
    <property type="match status" value="1"/>
</dbReference>
<dbReference type="FunFam" id="3.40.50.300:FF:000002">
    <property type="entry name" value="ATP synthase subunit alpha"/>
    <property type="match status" value="1"/>
</dbReference>
<dbReference type="Gene3D" id="2.40.30.20">
    <property type="match status" value="1"/>
</dbReference>
<dbReference type="Gene3D" id="1.20.150.20">
    <property type="entry name" value="ATP synthase alpha/beta chain, C-terminal domain"/>
    <property type="match status" value="1"/>
</dbReference>
<dbReference type="Gene3D" id="3.40.50.300">
    <property type="entry name" value="P-loop containing nucleotide triphosphate hydrolases"/>
    <property type="match status" value="1"/>
</dbReference>
<dbReference type="HAMAP" id="MF_01346">
    <property type="entry name" value="ATP_synth_alpha_bact"/>
    <property type="match status" value="1"/>
</dbReference>
<dbReference type="InterPro" id="IPR023366">
    <property type="entry name" value="ATP_synth_asu-like_sf"/>
</dbReference>
<dbReference type="InterPro" id="IPR000793">
    <property type="entry name" value="ATP_synth_asu_C"/>
</dbReference>
<dbReference type="InterPro" id="IPR038376">
    <property type="entry name" value="ATP_synth_asu_C_sf"/>
</dbReference>
<dbReference type="InterPro" id="IPR033732">
    <property type="entry name" value="ATP_synth_F1_a_nt-bd_dom"/>
</dbReference>
<dbReference type="InterPro" id="IPR005294">
    <property type="entry name" value="ATP_synth_F1_asu"/>
</dbReference>
<dbReference type="InterPro" id="IPR020003">
    <property type="entry name" value="ATPase_a/bsu_AS"/>
</dbReference>
<dbReference type="InterPro" id="IPR004100">
    <property type="entry name" value="ATPase_F1/V1/A1_a/bsu_N"/>
</dbReference>
<dbReference type="InterPro" id="IPR036121">
    <property type="entry name" value="ATPase_F1/V1/A1_a/bsu_N_sf"/>
</dbReference>
<dbReference type="InterPro" id="IPR000194">
    <property type="entry name" value="ATPase_F1/V1/A1_a/bsu_nucl-bd"/>
</dbReference>
<dbReference type="InterPro" id="IPR027417">
    <property type="entry name" value="P-loop_NTPase"/>
</dbReference>
<dbReference type="NCBIfam" id="TIGR00962">
    <property type="entry name" value="atpA"/>
    <property type="match status" value="1"/>
</dbReference>
<dbReference type="NCBIfam" id="NF009884">
    <property type="entry name" value="PRK13343.1"/>
    <property type="match status" value="1"/>
</dbReference>
<dbReference type="PANTHER" id="PTHR48082">
    <property type="entry name" value="ATP SYNTHASE SUBUNIT ALPHA, MITOCHONDRIAL"/>
    <property type="match status" value="1"/>
</dbReference>
<dbReference type="PANTHER" id="PTHR48082:SF2">
    <property type="entry name" value="ATP SYNTHASE SUBUNIT ALPHA, MITOCHONDRIAL"/>
    <property type="match status" value="1"/>
</dbReference>
<dbReference type="Pfam" id="PF00006">
    <property type="entry name" value="ATP-synt_ab"/>
    <property type="match status" value="1"/>
</dbReference>
<dbReference type="Pfam" id="PF00306">
    <property type="entry name" value="ATP-synt_ab_C"/>
    <property type="match status" value="1"/>
</dbReference>
<dbReference type="Pfam" id="PF02874">
    <property type="entry name" value="ATP-synt_ab_N"/>
    <property type="match status" value="1"/>
</dbReference>
<dbReference type="PIRSF" id="PIRSF039088">
    <property type="entry name" value="F_ATPase_subunit_alpha"/>
    <property type="match status" value="1"/>
</dbReference>
<dbReference type="SUPFAM" id="SSF47917">
    <property type="entry name" value="C-terminal domain of alpha and beta subunits of F1 ATP synthase"/>
    <property type="match status" value="1"/>
</dbReference>
<dbReference type="SUPFAM" id="SSF50615">
    <property type="entry name" value="N-terminal domain of alpha and beta subunits of F1 ATP synthase"/>
    <property type="match status" value="1"/>
</dbReference>
<dbReference type="SUPFAM" id="SSF52540">
    <property type="entry name" value="P-loop containing nucleoside triphosphate hydrolases"/>
    <property type="match status" value="1"/>
</dbReference>
<dbReference type="PROSITE" id="PS00152">
    <property type="entry name" value="ATPASE_ALPHA_BETA"/>
    <property type="match status" value="1"/>
</dbReference>
<feature type="chain" id="PRO_1000166563" description="ATP synthase subunit alpha">
    <location>
        <begin position="1"/>
        <end position="513"/>
    </location>
</feature>
<feature type="binding site" evidence="1">
    <location>
        <begin position="169"/>
        <end position="176"/>
    </location>
    <ligand>
        <name>ATP</name>
        <dbReference type="ChEBI" id="CHEBI:30616"/>
    </ligand>
</feature>
<feature type="site" description="Required for activity" evidence="1">
    <location>
        <position position="373"/>
    </location>
</feature>
<keyword id="KW-0066">ATP synthesis</keyword>
<keyword id="KW-0067">ATP-binding</keyword>
<keyword id="KW-0997">Cell inner membrane</keyword>
<keyword id="KW-1003">Cell membrane</keyword>
<keyword id="KW-0139">CF(1)</keyword>
<keyword id="KW-0375">Hydrogen ion transport</keyword>
<keyword id="KW-0406">Ion transport</keyword>
<keyword id="KW-0472">Membrane</keyword>
<keyword id="KW-0547">Nucleotide-binding</keyword>
<keyword id="KW-1185">Reference proteome</keyword>
<keyword id="KW-1278">Translocase</keyword>
<keyword id="KW-0813">Transport</keyword>
<reference key="1">
    <citation type="journal article" date="2011" name="Stand. Genomic Sci.">
        <title>Complete genome sequence of 'Thioalkalivibrio sulfidophilus' HL-EbGr7.</title>
        <authorList>
            <person name="Muyzer G."/>
            <person name="Sorokin D.Y."/>
            <person name="Mavromatis K."/>
            <person name="Lapidus A."/>
            <person name="Clum A."/>
            <person name="Ivanova N."/>
            <person name="Pati A."/>
            <person name="d'Haeseleer P."/>
            <person name="Woyke T."/>
            <person name="Kyrpides N.C."/>
        </authorList>
    </citation>
    <scope>NUCLEOTIDE SEQUENCE [LARGE SCALE GENOMIC DNA]</scope>
    <source>
        <strain>HL-EbGR7</strain>
    </source>
</reference>
<gene>
    <name evidence="1" type="primary">atpA</name>
    <name type="ordered locus">Tgr7_3307</name>
</gene>
<proteinExistence type="inferred from homology"/>
<protein>
    <recommendedName>
        <fullName evidence="1">ATP synthase subunit alpha</fullName>
        <ecNumber evidence="1">7.1.2.2</ecNumber>
    </recommendedName>
    <alternativeName>
        <fullName evidence="1">ATP synthase F1 sector subunit alpha</fullName>
    </alternativeName>
    <alternativeName>
        <fullName evidence="1">F-ATPase subunit alpha</fullName>
    </alternativeName>
</protein>